<evidence type="ECO:0000250" key="1">
    <source>
        <dbReference type="UniProtKB" id="Q7X9V3"/>
    </source>
</evidence>
<evidence type="ECO:0000250" key="2">
    <source>
        <dbReference type="UniProtKB" id="Q96F10"/>
    </source>
</evidence>
<evidence type="ECO:0000255" key="3"/>
<evidence type="ECO:0000255" key="4">
    <source>
        <dbReference type="PROSITE-ProRule" id="PRU00532"/>
    </source>
</evidence>
<evidence type="ECO:0000269" key="5">
    <source>
    </source>
</evidence>
<evidence type="ECO:0000303" key="6">
    <source>
    </source>
</evidence>
<evidence type="ECO:0000305" key="7"/>
<evidence type="ECO:0000312" key="8">
    <source>
        <dbReference type="Araport" id="AT1G24040"/>
    </source>
</evidence>
<evidence type="ECO:0000312" key="9">
    <source>
        <dbReference type="EMBL" id="AAF87151.1"/>
    </source>
</evidence>
<comment type="function">
    <text evidence="5">Protein acetyltransferase with dual specificity triggering both N-alpha-acetylation (NTA), with a large spectrum of modified N-termini, including methionine, alanine, serine and to a lower extent threonine and valine as substrates, and epsilon-lysine acetylation (KA).</text>
</comment>
<comment type="catalytic activity">
    <reaction evidence="5">
        <text>an N-terminal L-alpha-aminoacyl-[protein] + acetyl-CoA = N-terminal N(alpha)-acetyl-L-alpha-aminoacyl-[protein] + CoA + H(+)</text>
        <dbReference type="Rhea" id="RHEA:21028"/>
        <dbReference type="Rhea" id="RHEA-COMP:10636"/>
        <dbReference type="Rhea" id="RHEA-COMP:15589"/>
        <dbReference type="ChEBI" id="CHEBI:15378"/>
        <dbReference type="ChEBI" id="CHEBI:57287"/>
        <dbReference type="ChEBI" id="CHEBI:57288"/>
        <dbReference type="ChEBI" id="CHEBI:78597"/>
        <dbReference type="ChEBI" id="CHEBI:78598"/>
    </reaction>
</comment>
<comment type="catalytic activity">
    <reaction evidence="5">
        <text>L-lysyl-[protein] + acetyl-CoA = N(6)-acetyl-L-lysyl-[protein] + CoA + H(+)</text>
        <dbReference type="Rhea" id="RHEA:45948"/>
        <dbReference type="Rhea" id="RHEA-COMP:9752"/>
        <dbReference type="Rhea" id="RHEA-COMP:10731"/>
        <dbReference type="ChEBI" id="CHEBI:15378"/>
        <dbReference type="ChEBI" id="CHEBI:29969"/>
        <dbReference type="ChEBI" id="CHEBI:57287"/>
        <dbReference type="ChEBI" id="CHEBI:57288"/>
        <dbReference type="ChEBI" id="CHEBI:61930"/>
        <dbReference type="EC" id="2.3.1.48"/>
    </reaction>
</comment>
<comment type="catalytic activity">
    <reaction evidence="5">
        <text>N-terminal L-alanyl-[protein] + acetyl-CoA = N-terminal N(alpha)-acetyl-L-alanyl-[protein] + CoA + H(+)</text>
        <dbReference type="Rhea" id="RHEA:50500"/>
        <dbReference type="Rhea" id="RHEA-COMP:12701"/>
        <dbReference type="Rhea" id="RHEA-COMP:12702"/>
        <dbReference type="ChEBI" id="CHEBI:15378"/>
        <dbReference type="ChEBI" id="CHEBI:57287"/>
        <dbReference type="ChEBI" id="CHEBI:57288"/>
        <dbReference type="ChEBI" id="CHEBI:64718"/>
        <dbReference type="ChEBI" id="CHEBI:83683"/>
        <dbReference type="EC" id="2.3.1.255"/>
    </reaction>
</comment>
<comment type="catalytic activity">
    <reaction evidence="5">
        <text>N-terminal L-seryl-[protein] + acetyl-CoA = N-terminal N(alpha)-acetyl-L-seryl-[protein] + CoA + H(+)</text>
        <dbReference type="Rhea" id="RHEA:50504"/>
        <dbReference type="Rhea" id="RHEA-COMP:12703"/>
        <dbReference type="Rhea" id="RHEA-COMP:12704"/>
        <dbReference type="ChEBI" id="CHEBI:15378"/>
        <dbReference type="ChEBI" id="CHEBI:57287"/>
        <dbReference type="ChEBI" id="CHEBI:57288"/>
        <dbReference type="ChEBI" id="CHEBI:64738"/>
        <dbReference type="ChEBI" id="CHEBI:83690"/>
        <dbReference type="EC" id="2.3.1.255"/>
    </reaction>
</comment>
<comment type="catalytic activity">
    <reaction evidence="5">
        <text>N-terminal L-methionyl-[protein] + acetyl-CoA = N-terminal N(alpha)-acetyl-L-methionyl-[protein] + CoA + H(+)</text>
        <dbReference type="Rhea" id="RHEA:75239"/>
        <dbReference type="Rhea" id="RHEA-COMP:18493"/>
        <dbReference type="Rhea" id="RHEA-COMP:18494"/>
        <dbReference type="ChEBI" id="CHEBI:15378"/>
        <dbReference type="ChEBI" id="CHEBI:57287"/>
        <dbReference type="ChEBI" id="CHEBI:57288"/>
        <dbReference type="ChEBI" id="CHEBI:64731"/>
        <dbReference type="ChEBI" id="CHEBI:133414"/>
    </reaction>
</comment>
<comment type="catalytic activity">
    <reaction evidence="5">
        <text>N-terminal L-valyl-[protein] + acetyl-CoA = N-terminal N(alpha)-acetyl-L-valyl-[protein] + CoA + H(+)</text>
        <dbReference type="Rhea" id="RHEA:50508"/>
        <dbReference type="Rhea" id="RHEA-COMP:12705"/>
        <dbReference type="Rhea" id="RHEA-COMP:12706"/>
        <dbReference type="ChEBI" id="CHEBI:15378"/>
        <dbReference type="ChEBI" id="CHEBI:57287"/>
        <dbReference type="ChEBI" id="CHEBI:57288"/>
        <dbReference type="ChEBI" id="CHEBI:64741"/>
        <dbReference type="ChEBI" id="CHEBI:133371"/>
        <dbReference type="EC" id="2.3.1.255"/>
    </reaction>
</comment>
<comment type="catalytic activity">
    <reaction evidence="5">
        <text>N-terminal L-threonyl-[protein] + acetyl-CoA = N-terminal N(alpha)-acetyl-L-threonyl-[protein] + CoA + H(+)</text>
        <dbReference type="Rhea" id="RHEA:50516"/>
        <dbReference type="Rhea" id="RHEA-COMP:12709"/>
        <dbReference type="Rhea" id="RHEA-COMP:12710"/>
        <dbReference type="ChEBI" id="CHEBI:15378"/>
        <dbReference type="ChEBI" id="CHEBI:57287"/>
        <dbReference type="ChEBI" id="CHEBI:57288"/>
        <dbReference type="ChEBI" id="CHEBI:64739"/>
        <dbReference type="ChEBI" id="CHEBI:133375"/>
        <dbReference type="EC" id="2.3.1.255"/>
    </reaction>
</comment>
<comment type="subunit">
    <text evidence="1">Oligomer.</text>
</comment>
<comment type="interaction">
    <interactant intactId="EBI-15194797">
        <id>Q9LR91</id>
    </interactant>
    <interactant intactId="EBI-1571089">
        <id>O80450</id>
        <label>GT-3B</label>
    </interactant>
    <organismsDiffer>false</organismsDiffer>
    <experiments>3</experiments>
</comment>
<comment type="subcellular location">
    <subcellularLocation>
        <location evidence="5">Plastid</location>
        <location evidence="5">Chloroplast</location>
    </subcellularLocation>
</comment>
<comment type="tissue specificity">
    <text evidence="5">Expressed in green tissues.</text>
</comment>
<comment type="PTM">
    <text evidence="5">Autoacetylated.</text>
</comment>
<comment type="similarity">
    <text evidence="7">Belongs to the acetyltransferase family. GNAT subfamily.</text>
</comment>
<dbReference type="EC" id="2.3.1.255" evidence="4 5"/>
<dbReference type="EC" id="2.3.1.48" evidence="4 5"/>
<dbReference type="EMBL" id="AC002423">
    <property type="protein sequence ID" value="AAF87151.1"/>
    <property type="molecule type" value="Genomic_DNA"/>
</dbReference>
<dbReference type="EMBL" id="CP002684">
    <property type="protein sequence ID" value="AEE30470.1"/>
    <property type="molecule type" value="Genomic_DNA"/>
</dbReference>
<dbReference type="EMBL" id="CP002684">
    <property type="protein sequence ID" value="AEE30471.1"/>
    <property type="molecule type" value="Genomic_DNA"/>
</dbReference>
<dbReference type="EMBL" id="CP002684">
    <property type="protein sequence ID" value="ANM59350.1"/>
    <property type="molecule type" value="Genomic_DNA"/>
</dbReference>
<dbReference type="EMBL" id="AK117728">
    <property type="protein sequence ID" value="BAC42377.1"/>
    <property type="molecule type" value="mRNA"/>
</dbReference>
<dbReference type="EMBL" id="BT010890">
    <property type="protein sequence ID" value="AAR24668.1"/>
    <property type="molecule type" value="mRNA"/>
</dbReference>
<dbReference type="EMBL" id="AK175581">
    <property type="protein sequence ID" value="BAD43344.1"/>
    <property type="molecule type" value="mRNA"/>
</dbReference>
<dbReference type="EMBL" id="AK175958">
    <property type="protein sequence ID" value="BAD43721.1"/>
    <property type="molecule type" value="mRNA"/>
</dbReference>
<dbReference type="EMBL" id="AK176031">
    <property type="protein sequence ID" value="BAD43794.1"/>
    <property type="molecule type" value="mRNA"/>
</dbReference>
<dbReference type="EMBL" id="AK228115">
    <property type="protein sequence ID" value="BAF00073.1"/>
    <property type="molecule type" value="mRNA"/>
</dbReference>
<dbReference type="RefSeq" id="NP_001321714.1">
    <property type="nucleotide sequence ID" value="NM_001332635.1"/>
</dbReference>
<dbReference type="RefSeq" id="NP_173815.2">
    <property type="nucleotide sequence ID" value="NM_102251.2"/>
</dbReference>
<dbReference type="RefSeq" id="NP_849703.1">
    <property type="nucleotide sequence ID" value="NM_179372.3"/>
</dbReference>
<dbReference type="SMR" id="Q9LR91"/>
<dbReference type="FunCoup" id="Q9LR91">
    <property type="interactions" value="1711"/>
</dbReference>
<dbReference type="IntAct" id="Q9LR91">
    <property type="interactions" value="7"/>
</dbReference>
<dbReference type="STRING" id="3702.Q9LR91"/>
<dbReference type="GlyGen" id="Q9LR91">
    <property type="glycosylation" value="1 site"/>
</dbReference>
<dbReference type="PaxDb" id="3702-AT1G24040.2"/>
<dbReference type="ProteomicsDB" id="183673"/>
<dbReference type="EnsemblPlants" id="AT1G24040.1">
    <property type="protein sequence ID" value="AT1G24040.1"/>
    <property type="gene ID" value="AT1G24040"/>
</dbReference>
<dbReference type="EnsemblPlants" id="AT1G24040.2">
    <property type="protein sequence ID" value="AT1G24040.2"/>
    <property type="gene ID" value="AT1G24040"/>
</dbReference>
<dbReference type="EnsemblPlants" id="AT1G24040.3">
    <property type="protein sequence ID" value="AT1G24040.3"/>
    <property type="gene ID" value="AT1G24040"/>
</dbReference>
<dbReference type="GeneID" id="839016"/>
<dbReference type="Gramene" id="AT1G24040.1">
    <property type="protein sequence ID" value="AT1G24040.1"/>
    <property type="gene ID" value="AT1G24040"/>
</dbReference>
<dbReference type="Gramene" id="AT1G24040.2">
    <property type="protein sequence ID" value="AT1G24040.2"/>
    <property type="gene ID" value="AT1G24040"/>
</dbReference>
<dbReference type="Gramene" id="AT1G24040.3">
    <property type="protein sequence ID" value="AT1G24040.3"/>
    <property type="gene ID" value="AT1G24040"/>
</dbReference>
<dbReference type="KEGG" id="ath:AT1G24040"/>
<dbReference type="Araport" id="AT1G24040"/>
<dbReference type="TAIR" id="AT1G24040"/>
<dbReference type="eggNOG" id="ENOG502QTIQ">
    <property type="taxonomic scope" value="Eukaryota"/>
</dbReference>
<dbReference type="HOGENOM" id="CLU_072195_0_0_1"/>
<dbReference type="InParanoid" id="Q9LR91"/>
<dbReference type="OMA" id="PYISNMA"/>
<dbReference type="PRO" id="PR:Q9LR91"/>
<dbReference type="Proteomes" id="UP000006548">
    <property type="component" value="Chromosome 1"/>
</dbReference>
<dbReference type="ExpressionAtlas" id="Q9LR91">
    <property type="expression patterns" value="baseline and differential"/>
</dbReference>
<dbReference type="GO" id="GO:0009507">
    <property type="term" value="C:chloroplast"/>
    <property type="evidence" value="ECO:0000314"/>
    <property type="project" value="TAIR"/>
</dbReference>
<dbReference type="GO" id="GO:0008080">
    <property type="term" value="F:N-acetyltransferase activity"/>
    <property type="evidence" value="ECO:0000314"/>
    <property type="project" value="UniProtKB"/>
</dbReference>
<dbReference type="GO" id="GO:0006474">
    <property type="term" value="P:N-terminal protein amino acid acetylation"/>
    <property type="evidence" value="ECO:0000314"/>
    <property type="project" value="UniProtKB"/>
</dbReference>
<dbReference type="GO" id="GO:0018394">
    <property type="term" value="P:peptidyl-lysine acetylation"/>
    <property type="evidence" value="ECO:0000314"/>
    <property type="project" value="UniProtKB"/>
</dbReference>
<dbReference type="CDD" id="cd04301">
    <property type="entry name" value="NAT_SF"/>
    <property type="match status" value="1"/>
</dbReference>
<dbReference type="Gene3D" id="3.40.630.30">
    <property type="match status" value="1"/>
</dbReference>
<dbReference type="InterPro" id="IPR016181">
    <property type="entry name" value="Acyl_CoA_acyltransferase"/>
</dbReference>
<dbReference type="InterPro" id="IPR013653">
    <property type="entry name" value="GCN5-like_dom"/>
</dbReference>
<dbReference type="PANTHER" id="PTHR47489">
    <property type="entry name" value="ACYL-COA N-ACYLTRANSFERASES (NAT) SUPERFAMILY PROTEIN"/>
    <property type="match status" value="1"/>
</dbReference>
<dbReference type="PANTHER" id="PTHR47489:SF2">
    <property type="entry name" value="GCN5-RELATED N-ACETYLTRANSFERASE 5, CHLOROPLASTIC"/>
    <property type="match status" value="1"/>
</dbReference>
<dbReference type="Pfam" id="PF08445">
    <property type="entry name" value="FR47"/>
    <property type="match status" value="1"/>
</dbReference>
<dbReference type="SUPFAM" id="SSF55729">
    <property type="entry name" value="Acyl-CoA N-acyltransferases (Nat)"/>
    <property type="match status" value="1"/>
</dbReference>
<keyword id="KW-0150">Chloroplast</keyword>
<keyword id="KW-0934">Plastid</keyword>
<keyword id="KW-1185">Reference proteome</keyword>
<keyword id="KW-0808">Transferase</keyword>
<keyword id="KW-0809">Transit peptide</keyword>
<gene>
    <name evidence="6" type="primary">GNAT5</name>
    <name evidence="8" type="ordered locus">At1g24040</name>
    <name evidence="9" type="ORF">T23E23.19</name>
</gene>
<name>GNAT5_ARATH</name>
<sequence>MAALSISLAFSVDSLKPTQSTKFGFSSSSHRYPLLYSCKSHRSNLRFAFPPSSVSTATETGEENSKSTGNYAFLEESFRTGRFLSNDELEKLKTLEGFAYFQELESGSMWVRVMRHEEMDSTVHLLAESFGESMLLPSGYQSVLRFLIKQYLIERREVLPHAVTLVGFFRKKVDEFSDDGEEEAVMAGTVEVCLEKRGANASPPSPTPPKESPYICNMTVKEDLRRRGIGWHLLKASEELISQISPSKDVYLHCRMVDEAPFNMYKKAGYEVVKTDTVLVLLMLQRRKHLMRKKLLPLCTNPIVEMVGSDNELTSSANV</sequence>
<accession>Q9LR91</accession>
<reference key="1">
    <citation type="journal article" date="2000" name="Nature">
        <title>Sequence and analysis of chromosome 1 of the plant Arabidopsis thaliana.</title>
        <authorList>
            <person name="Theologis A."/>
            <person name="Ecker J.R."/>
            <person name="Palm C.J."/>
            <person name="Federspiel N.A."/>
            <person name="Kaul S."/>
            <person name="White O."/>
            <person name="Alonso J."/>
            <person name="Altafi H."/>
            <person name="Araujo R."/>
            <person name="Bowman C.L."/>
            <person name="Brooks S.Y."/>
            <person name="Buehler E."/>
            <person name="Chan A."/>
            <person name="Chao Q."/>
            <person name="Chen H."/>
            <person name="Cheuk R.F."/>
            <person name="Chin C.W."/>
            <person name="Chung M.K."/>
            <person name="Conn L."/>
            <person name="Conway A.B."/>
            <person name="Conway A.R."/>
            <person name="Creasy T.H."/>
            <person name="Dewar K."/>
            <person name="Dunn P."/>
            <person name="Etgu P."/>
            <person name="Feldblyum T.V."/>
            <person name="Feng J.-D."/>
            <person name="Fong B."/>
            <person name="Fujii C.Y."/>
            <person name="Gill J.E."/>
            <person name="Goldsmith A.D."/>
            <person name="Haas B."/>
            <person name="Hansen N.F."/>
            <person name="Hughes B."/>
            <person name="Huizar L."/>
            <person name="Hunter J.L."/>
            <person name="Jenkins J."/>
            <person name="Johnson-Hopson C."/>
            <person name="Khan S."/>
            <person name="Khaykin E."/>
            <person name="Kim C.J."/>
            <person name="Koo H.L."/>
            <person name="Kremenetskaia I."/>
            <person name="Kurtz D.B."/>
            <person name="Kwan A."/>
            <person name="Lam B."/>
            <person name="Langin-Hooper S."/>
            <person name="Lee A."/>
            <person name="Lee J.M."/>
            <person name="Lenz C.A."/>
            <person name="Li J.H."/>
            <person name="Li Y.-P."/>
            <person name="Lin X."/>
            <person name="Liu S.X."/>
            <person name="Liu Z.A."/>
            <person name="Luros J.S."/>
            <person name="Maiti R."/>
            <person name="Marziali A."/>
            <person name="Militscher J."/>
            <person name="Miranda M."/>
            <person name="Nguyen M."/>
            <person name="Nierman W.C."/>
            <person name="Osborne B.I."/>
            <person name="Pai G."/>
            <person name="Peterson J."/>
            <person name="Pham P.K."/>
            <person name="Rizzo M."/>
            <person name="Rooney T."/>
            <person name="Rowley D."/>
            <person name="Sakano H."/>
            <person name="Salzberg S.L."/>
            <person name="Schwartz J.R."/>
            <person name="Shinn P."/>
            <person name="Southwick A.M."/>
            <person name="Sun H."/>
            <person name="Tallon L.J."/>
            <person name="Tambunga G."/>
            <person name="Toriumi M.J."/>
            <person name="Town C.D."/>
            <person name="Utterback T."/>
            <person name="Van Aken S."/>
            <person name="Vaysberg M."/>
            <person name="Vysotskaia V.S."/>
            <person name="Walker M."/>
            <person name="Wu D."/>
            <person name="Yu G."/>
            <person name="Fraser C.M."/>
            <person name="Venter J.C."/>
            <person name="Davis R.W."/>
        </authorList>
    </citation>
    <scope>NUCLEOTIDE SEQUENCE [LARGE SCALE GENOMIC DNA]</scope>
    <source>
        <strain>cv. Columbia</strain>
    </source>
</reference>
<reference key="2">
    <citation type="journal article" date="2017" name="Plant J.">
        <title>Araport11: a complete reannotation of the Arabidopsis thaliana reference genome.</title>
        <authorList>
            <person name="Cheng C.Y."/>
            <person name="Krishnakumar V."/>
            <person name="Chan A.P."/>
            <person name="Thibaud-Nissen F."/>
            <person name="Schobel S."/>
            <person name="Town C.D."/>
        </authorList>
    </citation>
    <scope>GENOME REANNOTATION</scope>
    <source>
        <strain>cv. Columbia</strain>
    </source>
</reference>
<reference key="3">
    <citation type="journal article" date="2002" name="Science">
        <title>Functional annotation of a full-length Arabidopsis cDNA collection.</title>
        <authorList>
            <person name="Seki M."/>
            <person name="Narusaka M."/>
            <person name="Kamiya A."/>
            <person name="Ishida J."/>
            <person name="Satou M."/>
            <person name="Sakurai T."/>
            <person name="Nakajima M."/>
            <person name="Enju A."/>
            <person name="Akiyama K."/>
            <person name="Oono Y."/>
            <person name="Muramatsu M."/>
            <person name="Hayashizaki Y."/>
            <person name="Kawai J."/>
            <person name="Carninci P."/>
            <person name="Itoh M."/>
            <person name="Ishii Y."/>
            <person name="Arakawa T."/>
            <person name="Shibata K."/>
            <person name="Shinagawa A."/>
            <person name="Shinozaki K."/>
        </authorList>
    </citation>
    <scope>NUCLEOTIDE SEQUENCE [LARGE SCALE MRNA]</scope>
    <source>
        <strain>cv. Columbia</strain>
    </source>
</reference>
<reference key="4">
    <citation type="submission" date="2003-12" db="EMBL/GenBank/DDBJ databases">
        <title>Arabidopsis ORF clones.</title>
        <authorList>
            <person name="Kim C.J."/>
            <person name="Chen H."/>
            <person name="Cheuk R.F."/>
            <person name="Shinn P."/>
            <person name="Carninci P."/>
            <person name="Hayashizaki Y."/>
            <person name="Ishida J."/>
            <person name="Kamiya A."/>
            <person name="Kawai J."/>
            <person name="Narusaka M."/>
            <person name="Sakurai T."/>
            <person name="Satou M."/>
            <person name="Seki M."/>
            <person name="Shinozaki K."/>
            <person name="Ecker J.R."/>
        </authorList>
    </citation>
    <scope>NUCLEOTIDE SEQUENCE [LARGE SCALE MRNA]</scope>
    <source>
        <strain>cv. Columbia</strain>
    </source>
</reference>
<reference key="5">
    <citation type="submission" date="2006-07" db="EMBL/GenBank/DDBJ databases">
        <title>Large-scale analysis of RIKEN Arabidopsis full-length (RAFL) cDNAs.</title>
        <authorList>
            <person name="Totoki Y."/>
            <person name="Seki M."/>
            <person name="Ishida J."/>
            <person name="Nakajima M."/>
            <person name="Enju A."/>
            <person name="Kamiya A."/>
            <person name="Narusaka M."/>
            <person name="Shin-i T."/>
            <person name="Nakagawa M."/>
            <person name="Sakamoto N."/>
            <person name="Oishi K."/>
            <person name="Kohara Y."/>
            <person name="Kobayashi M."/>
            <person name="Toyoda A."/>
            <person name="Sakaki Y."/>
            <person name="Sakurai T."/>
            <person name="Iida K."/>
            <person name="Akiyama K."/>
            <person name="Satou M."/>
            <person name="Toyoda T."/>
            <person name="Konagaya A."/>
            <person name="Carninci P."/>
            <person name="Kawai J."/>
            <person name="Hayashizaki Y."/>
            <person name="Shinozaki K."/>
        </authorList>
    </citation>
    <scope>NUCLEOTIDE SEQUENCE [LARGE SCALE MRNA]</scope>
    <source>
        <strain>cv. Columbia</strain>
    </source>
</reference>
<reference key="6">
    <citation type="journal article" date="2020" name="Mol. Syst. Biol.">
        <title>Dual lysine and N-terminal acetyltransferases reveal the complexity underpinning protein acetylation.</title>
        <authorList>
            <person name="Bienvenut W.V."/>
            <person name="Bruenje A."/>
            <person name="Boyer J.-B."/>
            <person name="Muehlenbeck J.S."/>
            <person name="Bernal G."/>
            <person name="Lassowskat I."/>
            <person name="Dian C."/>
            <person name="Linster E."/>
            <person name="Dinh T.V."/>
            <person name="Koskela M.M."/>
            <person name="Jung V."/>
            <person name="Seidel J."/>
            <person name="Schyrba L.K."/>
            <person name="Ivanauskaite A."/>
            <person name="Eirich J."/>
            <person name="Hell R."/>
            <person name="Schwarzer D."/>
            <person name="Mulo P."/>
            <person name="Wirtz M."/>
            <person name="Meinnel T."/>
            <person name="Giglione C."/>
            <person name="Finkemeier I."/>
        </authorList>
    </citation>
    <scope>FUNCTION</scope>
    <scope>CATALYTIC ACTIVITY</scope>
    <scope>SUBCELLULAR LOCATION</scope>
    <scope>TISSUE SPECIFICITY</scope>
    <scope>AUTOACETYLATION</scope>
    <scope>GENE FAMILY</scope>
    <scope>NOMENCLATURE</scope>
    <source>
        <strain>cv. Columbia</strain>
    </source>
</reference>
<feature type="transit peptide" description="Chloroplast" evidence="3">
    <location>
        <begin position="1"/>
        <end position="55"/>
    </location>
</feature>
<feature type="chain" id="PRO_0000457954" description="GCN5-related N-acetyltransferase 5, chloroplastic">
    <location>
        <begin position="56"/>
        <end position="319"/>
    </location>
</feature>
<feature type="domain" description="N-acetyltransferase" evidence="4">
    <location>
        <begin position="109"/>
        <end position="297"/>
    </location>
</feature>
<feature type="active site" description="Proton donor" evidence="2">
    <location>
        <position position="265"/>
    </location>
</feature>
<feature type="binding site" evidence="2">
    <location>
        <begin position="218"/>
        <end position="220"/>
    </location>
    <ligand>
        <name>acetyl-CoA</name>
        <dbReference type="ChEBI" id="CHEBI:57288"/>
    </ligand>
</feature>
<feature type="binding site" evidence="2">
    <location>
        <begin position="226"/>
        <end position="231"/>
    </location>
    <ligand>
        <name>acetyl-CoA</name>
        <dbReference type="ChEBI" id="CHEBI:57288"/>
    </ligand>
</feature>
<feature type="binding site" evidence="2">
    <location>
        <begin position="258"/>
        <end position="260"/>
    </location>
    <ligand>
        <name>acetyl-CoA</name>
        <dbReference type="ChEBI" id="CHEBI:57288"/>
    </ligand>
</feature>
<feature type="binding site" evidence="2">
    <location>
        <position position="265"/>
    </location>
    <ligand>
        <name>acetyl-CoA</name>
        <dbReference type="ChEBI" id="CHEBI:57288"/>
    </ligand>
</feature>
<organism>
    <name type="scientific">Arabidopsis thaliana</name>
    <name type="common">Mouse-ear cress</name>
    <dbReference type="NCBI Taxonomy" id="3702"/>
    <lineage>
        <taxon>Eukaryota</taxon>
        <taxon>Viridiplantae</taxon>
        <taxon>Streptophyta</taxon>
        <taxon>Embryophyta</taxon>
        <taxon>Tracheophyta</taxon>
        <taxon>Spermatophyta</taxon>
        <taxon>Magnoliopsida</taxon>
        <taxon>eudicotyledons</taxon>
        <taxon>Gunneridae</taxon>
        <taxon>Pentapetalae</taxon>
        <taxon>rosids</taxon>
        <taxon>malvids</taxon>
        <taxon>Brassicales</taxon>
        <taxon>Brassicaceae</taxon>
        <taxon>Camelineae</taxon>
        <taxon>Arabidopsis</taxon>
    </lineage>
</organism>
<protein>
    <recommendedName>
        <fullName evidence="6">GCN5-related N-acetyltransferase 5, chloroplastic</fullName>
        <ecNumber evidence="4 5">2.3.1.255</ecNumber>
        <ecNumber evidence="4 5">2.3.1.48</ecNumber>
    </recommendedName>
</protein>
<proteinExistence type="evidence at protein level"/>